<accession>Q9S829</accession>
<keyword id="KW-0002">3D-structure</keyword>
<keyword id="KW-0150">Chloroplast</keyword>
<keyword id="KW-0472">Membrane</keyword>
<keyword id="KW-0520">NAD</keyword>
<keyword id="KW-0521">NADP</keyword>
<keyword id="KW-0934">Plastid</keyword>
<keyword id="KW-0618">Plastoquinone</keyword>
<keyword id="KW-0874">Quinone</keyword>
<keyword id="KW-1185">Reference proteome</keyword>
<keyword id="KW-0793">Thylakoid</keyword>
<keyword id="KW-0809">Transit peptide</keyword>
<keyword id="KW-1278">Translocase</keyword>
<keyword id="KW-0813">Transport</keyword>
<gene>
    <name evidence="7" type="primary">ndhO</name>
    <name evidence="6" type="synonym">NDH-O</name>
    <name evidence="9" type="ordered locus">At1g74880</name>
    <name evidence="10" type="ORF">F25A4.15</name>
    <name evidence="11" type="ORF">F9E10.27</name>
</gene>
<protein>
    <recommendedName>
        <fullName evidence="8">NAD(P)H-quinone oxidoreductase subunit O, chloroplastic</fullName>
        <ecNumber evidence="8">7.1.1.-</ecNumber>
    </recommendedName>
    <alternativeName>
        <fullName evidence="7">NAD(P)H dehydrogenase subunit O</fullName>
        <shortName evidence="8">NDH subunit O</shortName>
        <shortName evidence="6">NDH-O</shortName>
    </alternativeName>
    <alternativeName>
        <fullName evidence="8">NADH-plastoquinone oxidoreductase subunit O</fullName>
    </alternativeName>
</protein>
<comment type="function">
    <text evidence="8">NDH shuttles electrons from NAD(P)H:plastoquinone, via FMN and iron-sulfur (Fe-S) centers, to quinones in the photosynthetic chain and possibly in a chloroplast respiratory chain. The immediate electron acceptor for the enzyme in this species is believed to be plastoquinone. Couples the redox reaction to proton translocation, and thus conserves the redox energy in a proton gradient.</text>
</comment>
<comment type="catalytic activity">
    <reaction evidence="8">
        <text>a plastoquinone + NADH + (n+1) H(+)(in) = a plastoquinol + NAD(+) + n H(+)(out)</text>
        <dbReference type="Rhea" id="RHEA:42608"/>
        <dbReference type="Rhea" id="RHEA-COMP:9561"/>
        <dbReference type="Rhea" id="RHEA-COMP:9562"/>
        <dbReference type="ChEBI" id="CHEBI:15378"/>
        <dbReference type="ChEBI" id="CHEBI:17757"/>
        <dbReference type="ChEBI" id="CHEBI:57540"/>
        <dbReference type="ChEBI" id="CHEBI:57945"/>
        <dbReference type="ChEBI" id="CHEBI:62192"/>
    </reaction>
</comment>
<comment type="catalytic activity">
    <reaction evidence="8">
        <text>a plastoquinone + NADPH + (n+1) H(+)(in) = a plastoquinol + NADP(+) + n H(+)(out)</text>
        <dbReference type="Rhea" id="RHEA:42612"/>
        <dbReference type="Rhea" id="RHEA-COMP:9561"/>
        <dbReference type="Rhea" id="RHEA-COMP:9562"/>
        <dbReference type="ChEBI" id="CHEBI:15378"/>
        <dbReference type="ChEBI" id="CHEBI:17757"/>
        <dbReference type="ChEBI" id="CHEBI:57783"/>
        <dbReference type="ChEBI" id="CHEBI:58349"/>
        <dbReference type="ChEBI" id="CHEBI:62192"/>
    </reaction>
</comment>
<comment type="subunit">
    <text evidence="4 5">Part of the chloroplast NDH complex, composed of a mixture of chloroplast and nucleus encoded subunits. Component of the NDH subcomplex A, at least composed of ndhH, ndhI, ndhJ, ndhK, ndhL, ndhM, ndhN and ndhO.</text>
</comment>
<comment type="subcellular location">
    <subcellularLocation>
        <location evidence="1">Plastid</location>
        <location evidence="1">Chloroplast thylakoid membrane</location>
        <topology evidence="8">Peripheral membrane protein</topology>
        <orientation evidence="8">Stromal side</orientation>
    </subcellularLocation>
</comment>
<comment type="disruption phenotype">
    <text evidence="4">Malfunction of the NDH complex.</text>
</comment>
<comment type="similarity">
    <text evidence="8">Belongs to the NDH complex subunit O family.</text>
</comment>
<reference key="1">
    <citation type="journal article" date="2000" name="Nature">
        <title>Sequence and analysis of chromosome 1 of the plant Arabidopsis thaliana.</title>
        <authorList>
            <person name="Theologis A."/>
            <person name="Ecker J.R."/>
            <person name="Palm C.J."/>
            <person name="Federspiel N.A."/>
            <person name="Kaul S."/>
            <person name="White O."/>
            <person name="Alonso J."/>
            <person name="Altafi H."/>
            <person name="Araujo R."/>
            <person name="Bowman C.L."/>
            <person name="Brooks S.Y."/>
            <person name="Buehler E."/>
            <person name="Chan A."/>
            <person name="Chao Q."/>
            <person name="Chen H."/>
            <person name="Cheuk R.F."/>
            <person name="Chin C.W."/>
            <person name="Chung M.K."/>
            <person name="Conn L."/>
            <person name="Conway A.B."/>
            <person name="Conway A.R."/>
            <person name="Creasy T.H."/>
            <person name="Dewar K."/>
            <person name="Dunn P."/>
            <person name="Etgu P."/>
            <person name="Feldblyum T.V."/>
            <person name="Feng J.-D."/>
            <person name="Fong B."/>
            <person name="Fujii C.Y."/>
            <person name="Gill J.E."/>
            <person name="Goldsmith A.D."/>
            <person name="Haas B."/>
            <person name="Hansen N.F."/>
            <person name="Hughes B."/>
            <person name="Huizar L."/>
            <person name="Hunter J.L."/>
            <person name="Jenkins J."/>
            <person name="Johnson-Hopson C."/>
            <person name="Khan S."/>
            <person name="Khaykin E."/>
            <person name="Kim C.J."/>
            <person name="Koo H.L."/>
            <person name="Kremenetskaia I."/>
            <person name="Kurtz D.B."/>
            <person name="Kwan A."/>
            <person name="Lam B."/>
            <person name="Langin-Hooper S."/>
            <person name="Lee A."/>
            <person name="Lee J.M."/>
            <person name="Lenz C.A."/>
            <person name="Li J.H."/>
            <person name="Li Y.-P."/>
            <person name="Lin X."/>
            <person name="Liu S.X."/>
            <person name="Liu Z.A."/>
            <person name="Luros J.S."/>
            <person name="Maiti R."/>
            <person name="Marziali A."/>
            <person name="Militscher J."/>
            <person name="Miranda M."/>
            <person name="Nguyen M."/>
            <person name="Nierman W.C."/>
            <person name="Osborne B.I."/>
            <person name="Pai G."/>
            <person name="Peterson J."/>
            <person name="Pham P.K."/>
            <person name="Rizzo M."/>
            <person name="Rooney T."/>
            <person name="Rowley D."/>
            <person name="Sakano H."/>
            <person name="Salzberg S.L."/>
            <person name="Schwartz J.R."/>
            <person name="Shinn P."/>
            <person name="Southwick A.M."/>
            <person name="Sun H."/>
            <person name="Tallon L.J."/>
            <person name="Tambunga G."/>
            <person name="Toriumi M.J."/>
            <person name="Town C.D."/>
            <person name="Utterback T."/>
            <person name="Van Aken S."/>
            <person name="Vaysberg M."/>
            <person name="Vysotskaia V.S."/>
            <person name="Walker M."/>
            <person name="Wu D."/>
            <person name="Yu G."/>
            <person name="Fraser C.M."/>
            <person name="Venter J.C."/>
            <person name="Davis R.W."/>
        </authorList>
    </citation>
    <scope>NUCLEOTIDE SEQUENCE [LARGE SCALE GENOMIC DNA]</scope>
    <source>
        <strain>cv. Columbia</strain>
    </source>
</reference>
<reference key="2">
    <citation type="journal article" date="2017" name="Plant J.">
        <title>Araport11: a complete reannotation of the Arabidopsis thaliana reference genome.</title>
        <authorList>
            <person name="Cheng C.Y."/>
            <person name="Krishnakumar V."/>
            <person name="Chan A.P."/>
            <person name="Thibaud-Nissen F."/>
            <person name="Schobel S."/>
            <person name="Town C.D."/>
        </authorList>
    </citation>
    <scope>GENOME REANNOTATION</scope>
    <source>
        <strain>cv. Columbia</strain>
    </source>
</reference>
<reference key="3">
    <citation type="journal article" date="2003" name="Science">
        <title>Empirical analysis of transcriptional activity in the Arabidopsis genome.</title>
        <authorList>
            <person name="Yamada K."/>
            <person name="Lim J."/>
            <person name="Dale J.M."/>
            <person name="Chen H."/>
            <person name="Shinn P."/>
            <person name="Palm C.J."/>
            <person name="Southwick A.M."/>
            <person name="Wu H.C."/>
            <person name="Kim C.J."/>
            <person name="Nguyen M."/>
            <person name="Pham P.K."/>
            <person name="Cheuk R.F."/>
            <person name="Karlin-Newmann G."/>
            <person name="Liu S.X."/>
            <person name="Lam B."/>
            <person name="Sakano H."/>
            <person name="Wu T."/>
            <person name="Yu G."/>
            <person name="Miranda M."/>
            <person name="Quach H.L."/>
            <person name="Tripp M."/>
            <person name="Chang C.H."/>
            <person name="Lee J.M."/>
            <person name="Toriumi M.J."/>
            <person name="Chan M.M."/>
            <person name="Tang C.C."/>
            <person name="Onodera C.S."/>
            <person name="Deng J.M."/>
            <person name="Akiyama K."/>
            <person name="Ansari Y."/>
            <person name="Arakawa T."/>
            <person name="Banh J."/>
            <person name="Banno F."/>
            <person name="Bowser L."/>
            <person name="Brooks S.Y."/>
            <person name="Carninci P."/>
            <person name="Chao Q."/>
            <person name="Choy N."/>
            <person name="Enju A."/>
            <person name="Goldsmith A.D."/>
            <person name="Gurjal M."/>
            <person name="Hansen N.F."/>
            <person name="Hayashizaki Y."/>
            <person name="Johnson-Hopson C."/>
            <person name="Hsuan V.W."/>
            <person name="Iida K."/>
            <person name="Karnes M."/>
            <person name="Khan S."/>
            <person name="Koesema E."/>
            <person name="Ishida J."/>
            <person name="Jiang P.X."/>
            <person name="Jones T."/>
            <person name="Kawai J."/>
            <person name="Kamiya A."/>
            <person name="Meyers C."/>
            <person name="Nakajima M."/>
            <person name="Narusaka M."/>
            <person name="Seki M."/>
            <person name="Sakurai T."/>
            <person name="Satou M."/>
            <person name="Tamse R."/>
            <person name="Vaysberg M."/>
            <person name="Wallender E.K."/>
            <person name="Wong C."/>
            <person name="Yamamura Y."/>
            <person name="Yuan S."/>
            <person name="Shinozaki K."/>
            <person name="Davis R.W."/>
            <person name="Theologis A."/>
            <person name="Ecker J.R."/>
        </authorList>
    </citation>
    <scope>NUCLEOTIDE SEQUENCE [LARGE SCALE MRNA]</scope>
    <source>
        <strain>cv. Columbia</strain>
    </source>
</reference>
<reference key="4">
    <citation type="journal article" date="2005" name="Plant Cell">
        <title>New subunits NDH-M, -N, and -O, encoded by nuclear genes, are essential for plastid Ndh complex functioning in higher plants.</title>
        <authorList>
            <person name="Rumeau D."/>
            <person name="Becuwe-Linka N."/>
            <person name="Beyly A."/>
            <person name="Louwagie M."/>
            <person name="Garin J."/>
            <person name="Peltier G."/>
        </authorList>
    </citation>
    <scope>COMPONENT OF THE NDH COMPLEX</scope>
    <scope>DISRUPTION PHENOTYPE</scope>
</reference>
<reference key="5">
    <citation type="journal article" date="2009" name="Mol. Plant">
        <title>Towards characterization of the chloroplast NAD(P)H dehydrogenase complex.</title>
        <authorList>
            <person name="Suorsa M."/>
            <person name="Sirpioe S."/>
            <person name="Aro E.M."/>
        </authorList>
    </citation>
    <scope>REVIEW</scope>
</reference>
<reference key="6">
    <citation type="journal article" date="2011" name="Biochim. Biophys. Acta">
        <title>Structure and biogenesis of the chloroplast NAD(P)H dehydrogenase complex.</title>
        <authorList>
            <person name="Peng L."/>
            <person name="Yamamoto H."/>
            <person name="Shikanai T."/>
        </authorList>
    </citation>
    <scope>REVIEW</scope>
</reference>
<reference key="7">
    <citation type="journal article" date="2011" name="Plant Cell Physiol.">
        <title>Structure of the chloroplast NADH dehydrogenase-like complex: nomenclature for nuclear-encoded subunits.</title>
        <authorList>
            <person name="Ifuku K."/>
            <person name="Endo T."/>
            <person name="Shikanai T."/>
            <person name="Aro E.M."/>
        </authorList>
    </citation>
    <scope>NOMENCLATURE</scope>
    <scope>COMPONENT OF THE NDH COMPLEX</scope>
</reference>
<name>NDHO_ARATH</name>
<sequence length="158" mass="17657">MAFSATVSQLSSLSTISSSLPISSRRLPHRSLPQFTVKAEAEKEKQSTQGKSDGEASPAATKTPKTLPKKPVYSMKKGQIVRVEKEKYLNSINYLSVGHPPFYKGLDYIYEDRGEVLDLRVFETGEYALVGWVGIPTAPAWLPTDMLIKCEKLVYERM</sequence>
<evidence type="ECO:0000250" key="1">
    <source>
        <dbReference type="UniProtKB" id="Q9CAC5"/>
    </source>
</evidence>
<evidence type="ECO:0000255" key="2"/>
<evidence type="ECO:0000256" key="3">
    <source>
        <dbReference type="SAM" id="MobiDB-lite"/>
    </source>
</evidence>
<evidence type="ECO:0000269" key="4">
    <source>
    </source>
</evidence>
<evidence type="ECO:0000269" key="5">
    <source>
    </source>
</evidence>
<evidence type="ECO:0000303" key="6">
    <source>
    </source>
</evidence>
<evidence type="ECO:0000303" key="7">
    <source>
    </source>
</evidence>
<evidence type="ECO:0000305" key="8"/>
<evidence type="ECO:0000312" key="9">
    <source>
        <dbReference type="Araport" id="AT1G74880"/>
    </source>
</evidence>
<evidence type="ECO:0000312" key="10">
    <source>
        <dbReference type="EMBL" id="AAD55288.1"/>
    </source>
</evidence>
<evidence type="ECO:0000312" key="11">
    <source>
        <dbReference type="EMBL" id="AAG51918.1"/>
    </source>
</evidence>
<evidence type="ECO:0000312" key="12">
    <source>
        <dbReference type="Proteomes" id="UP000006548"/>
    </source>
</evidence>
<proteinExistence type="evidence at protein level"/>
<feature type="transit peptide" description="Chloroplast" evidence="2">
    <location>
        <begin position="1"/>
        <end position="38"/>
    </location>
</feature>
<feature type="chain" id="PRO_0000431815" description="NAD(P)H-quinone oxidoreductase subunit O, chloroplastic">
    <location>
        <begin position="39"/>
        <end position="158"/>
    </location>
</feature>
<feature type="region of interest" description="Disordered" evidence="3">
    <location>
        <begin position="33"/>
        <end position="70"/>
    </location>
</feature>
<feature type="compositionally biased region" description="Low complexity" evidence="3">
    <location>
        <begin position="56"/>
        <end position="70"/>
    </location>
</feature>
<dbReference type="EC" id="7.1.1.-" evidence="8"/>
<dbReference type="EMBL" id="AC008263">
    <property type="protein sequence ID" value="AAD55288.1"/>
    <property type="molecule type" value="Genomic_DNA"/>
</dbReference>
<dbReference type="EMBL" id="AC013258">
    <property type="protein sequence ID" value="AAG51918.1"/>
    <property type="molecule type" value="Genomic_DNA"/>
</dbReference>
<dbReference type="EMBL" id="CP002684">
    <property type="protein sequence ID" value="AEE35643.1"/>
    <property type="molecule type" value="Genomic_DNA"/>
</dbReference>
<dbReference type="EMBL" id="AF344320">
    <property type="protein sequence ID" value="AAK06871.1"/>
    <property type="molecule type" value="mRNA"/>
</dbReference>
<dbReference type="EMBL" id="AF410289">
    <property type="protein sequence ID" value="AAK95275.1"/>
    <property type="molecule type" value="mRNA"/>
</dbReference>
<dbReference type="EMBL" id="AY143808">
    <property type="protein sequence ID" value="AAN28747.1"/>
    <property type="molecule type" value="mRNA"/>
</dbReference>
<dbReference type="PIR" id="D96778">
    <property type="entry name" value="D96778"/>
</dbReference>
<dbReference type="RefSeq" id="NP_565093.1">
    <property type="nucleotide sequence ID" value="NM_106146.5"/>
</dbReference>
<dbReference type="PDB" id="7WFG">
    <property type="method" value="EM"/>
    <property type="resolution" value="4.33 A"/>
    <property type="chains" value="O=1-158"/>
</dbReference>
<dbReference type="PDBsum" id="7WFG"/>
<dbReference type="SMR" id="Q9S829"/>
<dbReference type="FunCoup" id="Q9S829">
    <property type="interactions" value="1235"/>
</dbReference>
<dbReference type="STRING" id="3702.Q9S829"/>
<dbReference type="TCDB" id="3.D.1.8.1">
    <property type="family name" value="the h+ or na+-translocating nadh dehydrogenase (ndh) family"/>
</dbReference>
<dbReference type="MetOSite" id="Q9S829"/>
<dbReference type="PaxDb" id="3702-AT1G74880.1"/>
<dbReference type="ProteomicsDB" id="251127"/>
<dbReference type="EnsemblPlants" id="AT1G74880.1">
    <property type="protein sequence ID" value="AT1G74880.1"/>
    <property type="gene ID" value="AT1G74880"/>
</dbReference>
<dbReference type="GeneID" id="843827"/>
<dbReference type="Gramene" id="AT1G74880.1">
    <property type="protein sequence ID" value="AT1G74880.1"/>
    <property type="gene ID" value="AT1G74880"/>
</dbReference>
<dbReference type="KEGG" id="ath:AT1G74880"/>
<dbReference type="Araport" id="AT1G74880"/>
<dbReference type="TAIR" id="AT1G74880">
    <property type="gene designation" value="NDHO"/>
</dbReference>
<dbReference type="eggNOG" id="ENOG502RZEJ">
    <property type="taxonomic scope" value="Eukaryota"/>
</dbReference>
<dbReference type="HOGENOM" id="CLU_130659_0_0_1"/>
<dbReference type="InParanoid" id="Q9S829"/>
<dbReference type="OMA" id="IINTPFR"/>
<dbReference type="PhylomeDB" id="Q9S829"/>
<dbReference type="PRO" id="PR:Q9S829"/>
<dbReference type="Proteomes" id="UP000006548">
    <property type="component" value="Chromosome 1"/>
</dbReference>
<dbReference type="ExpressionAtlas" id="Q9S829">
    <property type="expression patterns" value="baseline and differential"/>
</dbReference>
<dbReference type="GO" id="GO:0009507">
    <property type="term" value="C:chloroplast"/>
    <property type="evidence" value="ECO:0007005"/>
    <property type="project" value="TAIR"/>
</dbReference>
<dbReference type="GO" id="GO:0009535">
    <property type="term" value="C:chloroplast thylakoid membrane"/>
    <property type="evidence" value="ECO:0007005"/>
    <property type="project" value="TAIR"/>
</dbReference>
<dbReference type="GO" id="GO:0005739">
    <property type="term" value="C:mitochondrion"/>
    <property type="evidence" value="ECO:0007005"/>
    <property type="project" value="TAIR"/>
</dbReference>
<dbReference type="GO" id="GO:0010598">
    <property type="term" value="C:NAD(P)H dehydrogenase complex (plastoquinone)"/>
    <property type="evidence" value="ECO:0000304"/>
    <property type="project" value="TAIR"/>
</dbReference>
<dbReference type="GO" id="GO:0005886">
    <property type="term" value="C:plasma membrane"/>
    <property type="evidence" value="ECO:0007669"/>
    <property type="project" value="InterPro"/>
</dbReference>
<dbReference type="GO" id="GO:0016655">
    <property type="term" value="F:oxidoreductase activity, acting on NAD(P)H, quinone or similar compound as acceptor"/>
    <property type="evidence" value="ECO:0007669"/>
    <property type="project" value="InterPro"/>
</dbReference>
<dbReference type="GO" id="GO:0048038">
    <property type="term" value="F:quinone binding"/>
    <property type="evidence" value="ECO:0007669"/>
    <property type="project" value="UniProtKB-KW"/>
</dbReference>
<dbReference type="GO" id="GO:0010258">
    <property type="term" value="P:NADH dehydrogenase complex (plastoquinone) assembly"/>
    <property type="evidence" value="ECO:0000315"/>
    <property type="project" value="TAIR"/>
</dbReference>
<dbReference type="InterPro" id="IPR020905">
    <property type="entry name" value="NdhO"/>
</dbReference>
<dbReference type="PANTHER" id="PTHR36728">
    <property type="entry name" value="NAD(P)H-QUINONE OXIDOREDUCTASE SUBUNIT O, CHLOROPLASTIC"/>
    <property type="match status" value="1"/>
</dbReference>
<dbReference type="PANTHER" id="PTHR36728:SF2">
    <property type="entry name" value="NAD(P)H-QUINONE OXIDOREDUCTASE SUBUNIT O, CHLOROPLASTIC"/>
    <property type="match status" value="1"/>
</dbReference>
<dbReference type="Pfam" id="PF11910">
    <property type="entry name" value="NdhO"/>
    <property type="match status" value="1"/>
</dbReference>
<organism evidence="12">
    <name type="scientific">Arabidopsis thaliana</name>
    <name type="common">Mouse-ear cress</name>
    <dbReference type="NCBI Taxonomy" id="3702"/>
    <lineage>
        <taxon>Eukaryota</taxon>
        <taxon>Viridiplantae</taxon>
        <taxon>Streptophyta</taxon>
        <taxon>Embryophyta</taxon>
        <taxon>Tracheophyta</taxon>
        <taxon>Spermatophyta</taxon>
        <taxon>Magnoliopsida</taxon>
        <taxon>eudicotyledons</taxon>
        <taxon>Gunneridae</taxon>
        <taxon>Pentapetalae</taxon>
        <taxon>rosids</taxon>
        <taxon>malvids</taxon>
        <taxon>Brassicales</taxon>
        <taxon>Brassicaceae</taxon>
        <taxon>Camelineae</taxon>
        <taxon>Arabidopsis</taxon>
    </lineage>
</organism>